<feature type="chain" id="PRO_0000139387" description="Methylated-DNA--protein-cysteine methyltransferase">
    <location>
        <begin position="1"/>
        <end position="151"/>
    </location>
</feature>
<feature type="active site" description="Nucleophile; methyl group acceptor" evidence="1">
    <location>
        <position position="119"/>
    </location>
</feature>
<feature type="strand" evidence="3">
    <location>
        <begin position="3"/>
        <end position="9"/>
    </location>
</feature>
<feature type="strand" evidence="3">
    <location>
        <begin position="12"/>
        <end position="18"/>
    </location>
</feature>
<feature type="strand" evidence="3">
    <location>
        <begin position="23"/>
        <end position="29"/>
    </location>
</feature>
<feature type="strand" evidence="4">
    <location>
        <begin position="33"/>
        <end position="35"/>
    </location>
</feature>
<feature type="helix" evidence="3">
    <location>
        <begin position="39"/>
        <end position="42"/>
    </location>
</feature>
<feature type="helix" evidence="3">
    <location>
        <begin position="43"/>
        <end position="53"/>
    </location>
</feature>
<feature type="helix" evidence="3">
    <location>
        <begin position="70"/>
        <end position="79"/>
    </location>
</feature>
<feature type="helix" evidence="3">
    <location>
        <begin position="90"/>
        <end position="97"/>
    </location>
</feature>
<feature type="helix" evidence="3">
    <location>
        <begin position="101"/>
        <end position="109"/>
    </location>
</feature>
<feature type="strand" evidence="3">
    <location>
        <begin position="112"/>
        <end position="114"/>
    </location>
</feature>
<feature type="helix" evidence="3">
    <location>
        <begin position="119"/>
        <end position="121"/>
    </location>
</feature>
<feature type="strand" evidence="3">
    <location>
        <begin position="122"/>
        <end position="124"/>
    </location>
</feature>
<feature type="strand" evidence="2">
    <location>
        <begin position="125"/>
        <end position="128"/>
    </location>
</feature>
<feature type="helix" evidence="3">
    <location>
        <begin position="135"/>
        <end position="144"/>
    </location>
</feature>
<name>OGT_SACS2</name>
<sequence>MLVYGLYKSPLGYITVAKDDKGFIMLDFCDCVEGNSRDDSSFTEFFHKLDLYFEGKPINLREPINLKTYPFRLSVFKEVMKIPWGKVMTYKQIADSLGTSPRAVGMALSKNPILLIIPCHRVIAENGIGGYSRGVKLKRALLELEGVKIPE</sequence>
<proteinExistence type="evidence at protein level"/>
<gene>
    <name evidence="1" type="primary">ogt</name>
    <name type="ordered locus">SSO2487</name>
</gene>
<dbReference type="EC" id="2.1.1.63" evidence="1"/>
<dbReference type="EMBL" id="AE006641">
    <property type="protein sequence ID" value="AAK42623.1"/>
    <property type="molecule type" value="Genomic_DNA"/>
</dbReference>
<dbReference type="PIR" id="H90420">
    <property type="entry name" value="H90420"/>
</dbReference>
<dbReference type="RefSeq" id="WP_010923891.1">
    <property type="nucleotide sequence ID" value="NC_002754.1"/>
</dbReference>
<dbReference type="PDB" id="4ZYD">
    <property type="method" value="X-ray"/>
    <property type="resolution" value="2.68 A"/>
    <property type="chains" value="A=1-151"/>
</dbReference>
<dbReference type="PDB" id="4ZYE">
    <property type="method" value="X-ray"/>
    <property type="resolution" value="1.85 A"/>
    <property type="chains" value="A=1-151"/>
</dbReference>
<dbReference type="PDB" id="4ZYG">
    <property type="method" value="X-ray"/>
    <property type="resolution" value="2.80 A"/>
    <property type="chains" value="A/B=1-151"/>
</dbReference>
<dbReference type="PDB" id="4ZYH">
    <property type="method" value="X-ray"/>
    <property type="resolution" value="2.60 A"/>
    <property type="chains" value="A=1-151"/>
</dbReference>
<dbReference type="PDB" id="5LLQ">
    <property type="method" value="X-ray"/>
    <property type="resolution" value="2.70 A"/>
    <property type="chains" value="A/B=1-151"/>
</dbReference>
<dbReference type="PDB" id="6GA0">
    <property type="method" value="X-ray"/>
    <property type="resolution" value="2.00 A"/>
    <property type="chains" value="A=1-151"/>
</dbReference>
<dbReference type="PDB" id="8AES">
    <property type="method" value="X-ray"/>
    <property type="resolution" value="2.80 A"/>
    <property type="chains" value="A/B/C/D/E/F/G/H/I/J=1-151"/>
</dbReference>
<dbReference type="PDBsum" id="4ZYD"/>
<dbReference type="PDBsum" id="4ZYE"/>
<dbReference type="PDBsum" id="4ZYG"/>
<dbReference type="PDBsum" id="4ZYH"/>
<dbReference type="PDBsum" id="5LLQ"/>
<dbReference type="PDBsum" id="6GA0"/>
<dbReference type="PDBsum" id="8AES"/>
<dbReference type="SMR" id="Q97VW7"/>
<dbReference type="FunCoup" id="Q97VW7">
    <property type="interactions" value="66"/>
</dbReference>
<dbReference type="STRING" id="273057.SSO2487"/>
<dbReference type="PaxDb" id="273057-SSO2487"/>
<dbReference type="EnsemblBacteria" id="AAK42623">
    <property type="protein sequence ID" value="AAK42623"/>
    <property type="gene ID" value="SSO2487"/>
</dbReference>
<dbReference type="GeneID" id="84060749"/>
<dbReference type="KEGG" id="sso:SSO2487"/>
<dbReference type="PATRIC" id="fig|273057.12.peg.2568"/>
<dbReference type="eggNOG" id="arCOG02724">
    <property type="taxonomic scope" value="Archaea"/>
</dbReference>
<dbReference type="HOGENOM" id="CLU_000445_52_2_2"/>
<dbReference type="InParanoid" id="Q97VW7"/>
<dbReference type="PhylomeDB" id="Q97VW7"/>
<dbReference type="BRENDA" id="2.1.1.63">
    <property type="organism ID" value="6163"/>
</dbReference>
<dbReference type="EvolutionaryTrace" id="Q97VW7"/>
<dbReference type="Proteomes" id="UP000001974">
    <property type="component" value="Chromosome"/>
</dbReference>
<dbReference type="GO" id="GO:0005737">
    <property type="term" value="C:cytoplasm"/>
    <property type="evidence" value="ECO:0007669"/>
    <property type="project" value="UniProtKB-SubCell"/>
</dbReference>
<dbReference type="GO" id="GO:0003908">
    <property type="term" value="F:methylated-DNA-[protein]-cysteine S-methyltransferase activity"/>
    <property type="evidence" value="ECO:0007669"/>
    <property type="project" value="UniProtKB-UniRule"/>
</dbReference>
<dbReference type="GO" id="GO:0006307">
    <property type="term" value="P:DNA alkylation repair"/>
    <property type="evidence" value="ECO:0007669"/>
    <property type="project" value="UniProtKB-UniRule"/>
</dbReference>
<dbReference type="GO" id="GO:0032259">
    <property type="term" value="P:methylation"/>
    <property type="evidence" value="ECO:0007669"/>
    <property type="project" value="UniProtKB-KW"/>
</dbReference>
<dbReference type="CDD" id="cd06445">
    <property type="entry name" value="ATase"/>
    <property type="match status" value="1"/>
</dbReference>
<dbReference type="FunFam" id="1.10.10.10:FF:000214">
    <property type="entry name" value="Methylated-DNA--protein-cysteine methyltransferase"/>
    <property type="match status" value="1"/>
</dbReference>
<dbReference type="Gene3D" id="3.30.160.70">
    <property type="entry name" value="Methylated DNA-protein cysteine methyltransferase domain"/>
    <property type="match status" value="1"/>
</dbReference>
<dbReference type="Gene3D" id="1.10.10.10">
    <property type="entry name" value="Winged helix-like DNA-binding domain superfamily/Winged helix DNA-binding domain"/>
    <property type="match status" value="1"/>
</dbReference>
<dbReference type="HAMAP" id="MF_00772">
    <property type="entry name" value="OGT"/>
    <property type="match status" value="1"/>
</dbReference>
<dbReference type="InterPro" id="IPR001497">
    <property type="entry name" value="MethylDNA_cys_MeTrfase_AS"/>
</dbReference>
<dbReference type="InterPro" id="IPR014048">
    <property type="entry name" value="MethylDNA_cys_MeTrfase_DNA-bd"/>
</dbReference>
<dbReference type="InterPro" id="IPR036217">
    <property type="entry name" value="MethylDNA_cys_MeTrfase_DNAb"/>
</dbReference>
<dbReference type="InterPro" id="IPR008332">
    <property type="entry name" value="MethylG_MeTrfase_N"/>
</dbReference>
<dbReference type="InterPro" id="IPR023546">
    <property type="entry name" value="MGMT"/>
</dbReference>
<dbReference type="InterPro" id="IPR036631">
    <property type="entry name" value="MGMT_N_sf"/>
</dbReference>
<dbReference type="InterPro" id="IPR036388">
    <property type="entry name" value="WH-like_DNA-bd_sf"/>
</dbReference>
<dbReference type="NCBIfam" id="TIGR00589">
    <property type="entry name" value="ogt"/>
    <property type="match status" value="1"/>
</dbReference>
<dbReference type="PANTHER" id="PTHR10815">
    <property type="entry name" value="METHYLATED-DNA--PROTEIN-CYSTEINE METHYLTRANSFERASE"/>
    <property type="match status" value="1"/>
</dbReference>
<dbReference type="PANTHER" id="PTHR10815:SF13">
    <property type="entry name" value="METHYLATED-DNA--PROTEIN-CYSTEINE METHYLTRANSFERASE"/>
    <property type="match status" value="1"/>
</dbReference>
<dbReference type="Pfam" id="PF01035">
    <property type="entry name" value="DNA_binding_1"/>
    <property type="match status" value="1"/>
</dbReference>
<dbReference type="Pfam" id="PF02870">
    <property type="entry name" value="Methyltransf_1N"/>
    <property type="match status" value="1"/>
</dbReference>
<dbReference type="SUPFAM" id="SSF53155">
    <property type="entry name" value="Methylated DNA-protein cysteine methyltransferase domain"/>
    <property type="match status" value="1"/>
</dbReference>
<dbReference type="SUPFAM" id="SSF46767">
    <property type="entry name" value="Methylated DNA-protein cysteine methyltransferase, C-terminal domain"/>
    <property type="match status" value="1"/>
</dbReference>
<dbReference type="PROSITE" id="PS00374">
    <property type="entry name" value="MGMT"/>
    <property type="match status" value="1"/>
</dbReference>
<evidence type="ECO:0000255" key="1">
    <source>
        <dbReference type="HAMAP-Rule" id="MF_00772"/>
    </source>
</evidence>
<evidence type="ECO:0007829" key="2">
    <source>
        <dbReference type="PDB" id="4ZYD"/>
    </source>
</evidence>
<evidence type="ECO:0007829" key="3">
    <source>
        <dbReference type="PDB" id="4ZYE"/>
    </source>
</evidence>
<evidence type="ECO:0007829" key="4">
    <source>
        <dbReference type="PDB" id="5LLQ"/>
    </source>
</evidence>
<protein>
    <recommendedName>
        <fullName evidence="1">Methylated-DNA--protein-cysteine methyltransferase</fullName>
        <ecNumber evidence="1">2.1.1.63</ecNumber>
    </recommendedName>
    <alternativeName>
        <fullName evidence="1">6-O-methylguanine-DNA methyltransferase</fullName>
        <shortName evidence="1">MGMT</shortName>
    </alternativeName>
    <alternativeName>
        <fullName evidence="1">O-6-methylguanine-DNA-alkyltransferase</fullName>
    </alternativeName>
</protein>
<reference key="1">
    <citation type="journal article" date="2001" name="Proc. Natl. Acad. Sci. U.S.A.">
        <title>The complete genome of the crenarchaeon Sulfolobus solfataricus P2.</title>
        <authorList>
            <person name="She Q."/>
            <person name="Singh R.K."/>
            <person name="Confalonieri F."/>
            <person name="Zivanovic Y."/>
            <person name="Allard G."/>
            <person name="Awayez M.J."/>
            <person name="Chan-Weiher C.C.-Y."/>
            <person name="Clausen I.G."/>
            <person name="Curtis B.A."/>
            <person name="De Moors A."/>
            <person name="Erauso G."/>
            <person name="Fletcher C."/>
            <person name="Gordon P.M.K."/>
            <person name="Heikamp-de Jong I."/>
            <person name="Jeffries A.C."/>
            <person name="Kozera C.J."/>
            <person name="Medina N."/>
            <person name="Peng X."/>
            <person name="Thi-Ngoc H.P."/>
            <person name="Redder P."/>
            <person name="Schenk M.E."/>
            <person name="Theriault C."/>
            <person name="Tolstrup N."/>
            <person name="Charlebois R.L."/>
            <person name="Doolittle W.F."/>
            <person name="Duguet M."/>
            <person name="Gaasterland T."/>
            <person name="Garrett R.A."/>
            <person name="Ragan M.A."/>
            <person name="Sensen C.W."/>
            <person name="Van der Oost J."/>
        </authorList>
    </citation>
    <scope>NUCLEOTIDE SEQUENCE [LARGE SCALE GENOMIC DNA]</scope>
    <source>
        <strain>ATCC 35092 / DSM 1617 / JCM 11322 / P2</strain>
    </source>
</reference>
<accession>Q97VW7</accession>
<organism>
    <name type="scientific">Saccharolobus solfataricus (strain ATCC 35092 / DSM 1617 / JCM 11322 / P2)</name>
    <name type="common">Sulfolobus solfataricus</name>
    <dbReference type="NCBI Taxonomy" id="273057"/>
    <lineage>
        <taxon>Archaea</taxon>
        <taxon>Thermoproteota</taxon>
        <taxon>Thermoprotei</taxon>
        <taxon>Sulfolobales</taxon>
        <taxon>Sulfolobaceae</taxon>
        <taxon>Saccharolobus</taxon>
    </lineage>
</organism>
<comment type="function">
    <text evidence="1">Involved in the cellular defense against the biological effects of O6-methylguanine (O6-MeG) and O4-methylthymine (O4-MeT) in DNA. Repairs the methylated nucleobase in DNA by stoichiometrically transferring the methyl group to a cysteine residue in the enzyme. This is a suicide reaction: the enzyme is irreversibly inactivated.</text>
</comment>
<comment type="catalytic activity">
    <reaction evidence="1">
        <text>a 6-O-methyl-2'-deoxyguanosine in DNA + L-cysteinyl-[protein] = S-methyl-L-cysteinyl-[protein] + a 2'-deoxyguanosine in DNA</text>
        <dbReference type="Rhea" id="RHEA:24000"/>
        <dbReference type="Rhea" id="RHEA-COMP:10131"/>
        <dbReference type="Rhea" id="RHEA-COMP:10132"/>
        <dbReference type="Rhea" id="RHEA-COMP:11367"/>
        <dbReference type="Rhea" id="RHEA-COMP:11368"/>
        <dbReference type="ChEBI" id="CHEBI:29950"/>
        <dbReference type="ChEBI" id="CHEBI:82612"/>
        <dbReference type="ChEBI" id="CHEBI:85445"/>
        <dbReference type="ChEBI" id="CHEBI:85448"/>
        <dbReference type="EC" id="2.1.1.63"/>
    </reaction>
</comment>
<comment type="catalytic activity">
    <reaction evidence="1">
        <text>a 4-O-methyl-thymidine in DNA + L-cysteinyl-[protein] = a thymidine in DNA + S-methyl-L-cysteinyl-[protein]</text>
        <dbReference type="Rhea" id="RHEA:53428"/>
        <dbReference type="Rhea" id="RHEA-COMP:10131"/>
        <dbReference type="Rhea" id="RHEA-COMP:10132"/>
        <dbReference type="Rhea" id="RHEA-COMP:13555"/>
        <dbReference type="Rhea" id="RHEA-COMP:13556"/>
        <dbReference type="ChEBI" id="CHEBI:29950"/>
        <dbReference type="ChEBI" id="CHEBI:82612"/>
        <dbReference type="ChEBI" id="CHEBI:137386"/>
        <dbReference type="ChEBI" id="CHEBI:137387"/>
        <dbReference type="EC" id="2.1.1.63"/>
    </reaction>
</comment>
<comment type="subcellular location">
    <subcellularLocation>
        <location evidence="1">Cytoplasm</location>
    </subcellularLocation>
</comment>
<comment type="miscellaneous">
    <text>This enzyme catalyzes only one turnover and therefore is not strictly catalytic. According to one definition, an enzyme is a biocatalyst that acts repeatedly and over many reaction cycles.</text>
</comment>
<comment type="similarity">
    <text evidence="1">Belongs to the MGMT family.</text>
</comment>
<keyword id="KW-0002">3D-structure</keyword>
<keyword id="KW-0963">Cytoplasm</keyword>
<keyword id="KW-0227">DNA damage</keyword>
<keyword id="KW-0234">DNA repair</keyword>
<keyword id="KW-0489">Methyltransferase</keyword>
<keyword id="KW-1185">Reference proteome</keyword>
<keyword id="KW-0808">Transferase</keyword>